<proteinExistence type="evidence at protein level"/>
<organismHost>
    <name type="scientific">Escherichia coli</name>
    <dbReference type="NCBI Taxonomy" id="562"/>
</organismHost>
<evidence type="ECO:0000269" key="1">
    <source>
    </source>
</evidence>
<evidence type="ECO:0000269" key="2">
    <source>
    </source>
</evidence>
<evidence type="ECO:0000269" key="3">
    <source>
    </source>
</evidence>
<evidence type="ECO:0000269" key="4">
    <source>
    </source>
</evidence>
<evidence type="ECO:0007829" key="5">
    <source>
        <dbReference type="PDB" id="1M0D"/>
    </source>
</evidence>
<gene>
    <name type="ordered locus">3</name>
</gene>
<reference key="1">
    <citation type="journal article" date="1983" name="J. Mol. Biol.">
        <title>Complete nucleotide sequence of bacteriophage T7 DNA and the locations of T7 genetic elements.</title>
        <authorList>
            <person name="Dunn J.J."/>
            <person name="Studier F.W."/>
        </authorList>
    </citation>
    <scope>NUCLEOTIDE SEQUENCE [LARGE SCALE GENOMIC DNA]</scope>
</reference>
<reference key="2">
    <citation type="journal article" date="1981" name="J. Mol. Biol.">
        <title>Nucleotide sequence from the genetic left end of bacteriophage T7 DNA to the beginning of gene 4.</title>
        <authorList>
            <person name="Dunn J.J."/>
            <person name="Studier F.W."/>
        </authorList>
    </citation>
    <scope>NUCLEOTIDE SEQUENCE [GENOMIC DNA]</scope>
</reference>
<reference key="3">
    <citation type="journal article" date="1985" name="J. Biol. Chem.">
        <title>An endonuclease specific for single-stranded DNA selectively damages the genomic DNA and induces the SOS response.</title>
        <authorList>
            <person name="Panayotatos N."/>
            <person name="Fontaine A."/>
        </authorList>
    </citation>
    <scope>FUNCTION</scope>
</reference>
<reference key="4">
    <citation type="journal article" date="1997" name="J. Mol. Biol.">
        <title>The junction-resolving enzyme T7 endonuclease I: quaternary structure and interaction with DNA.</title>
        <authorList>
            <person name="Parkinson M.J."/>
            <person name="Lilley D.M."/>
        </authorList>
    </citation>
    <scope>SUBUNIT</scope>
    <scope>FUNCTION</scope>
</reference>
<reference key="5">
    <citation type="journal article" date="2003" name="EMBO J.">
        <title>The complex between a four-way DNA junction and T7 endonuclease I.</title>
        <authorList>
            <person name="Declais A.C."/>
            <person name="Fogg J.M."/>
            <person name="Freeman A.D."/>
            <person name="Coste F."/>
            <person name="Hadden J.M."/>
            <person name="Phillips S.E."/>
            <person name="Lilley D.M."/>
        </authorList>
    </citation>
    <scope>FUNCTION</scope>
</reference>
<reference key="6">
    <citation type="journal article" date="2013" name="J. Mol. Biol.">
        <title>The importance of the N-terminus of T7 endonuclease I in the interaction with DNA junctions.</title>
        <authorList>
            <person name="Freeman A.D."/>
            <person name="Declais A.C."/>
            <person name="Lilley D.M."/>
        </authorList>
    </citation>
    <scope>FUNCTION</scope>
</reference>
<reference key="7">
    <citation type="journal article" date="2001" name="Nat. Struct. Biol.">
        <title>Crystal structure of the Holliday junction resolving enzyme T7 endonuclease I.</title>
        <authorList>
            <person name="Hadden J.M."/>
            <person name="Convery M.A."/>
            <person name="Declais A.C."/>
            <person name="Lilley D.M."/>
            <person name="Phillips S.E."/>
        </authorList>
    </citation>
    <scope>X-RAY CRYSTALLOGRAPHY (2.1 ANGSTROMS) OF 12-149</scope>
</reference>
<reference key="8">
    <citation type="journal article" date="2002" name="EMBO J.">
        <title>Metal ions bound at the active site of the junction-resolving enzyme T7 endonuclease I.</title>
        <authorList>
            <person name="Hadden J.M."/>
            <person name="Declais A.C."/>
            <person name="Phillips S.E."/>
            <person name="Lilley D.M."/>
        </authorList>
    </citation>
    <scope>X-RAY CRYSTALLOGRAPHY (1.9 ANGSTROMS) OF 12-149</scope>
</reference>
<reference key="9">
    <citation type="journal article" date="2007" name="Nature">
        <title>The structural basis of Holliday junction resolution by T7 endonuclease I.</title>
        <authorList>
            <person name="Hadden J.M."/>
            <person name="Declais A.C."/>
            <person name="Carr S.B."/>
            <person name="Lilley D.M."/>
            <person name="Phillips S.E."/>
        </authorList>
    </citation>
    <scope>X-RAY CRYSTALLOGRAPHY (3.1 ANGSTROMS)</scope>
</reference>
<reference key="10">
    <citation type="journal article" date="2008" name="Protein Sci.">
        <title>The structure of a fibril-forming sequence, NNQQNY, in the context of a globular fold.</title>
        <authorList>
            <person name="Guo Z."/>
            <person name="Eisenberg D."/>
        </authorList>
    </citation>
    <scope>X-RAY CRYSTALLOGRAPHY (3.0 ANGSTROMS) OF 18-145</scope>
</reference>
<keyword id="KW-0002">3D-structure</keyword>
<keyword id="KW-1261">Bacterial host gene expression shutoff by virus</keyword>
<keyword id="KW-1247">Degradation of host chromosome by virus</keyword>
<keyword id="KW-0238">DNA-binding</keyword>
<keyword id="KW-0255">Endonuclease</keyword>
<keyword id="KW-1190">Host gene expression shutoff by virus</keyword>
<keyword id="KW-0945">Host-virus interaction</keyword>
<keyword id="KW-0378">Hydrolase</keyword>
<keyword id="KW-0540">Nuclease</keyword>
<keyword id="KW-1185">Reference proteome</keyword>
<sequence>MAGYGAKGIRKVGAFRSGLEDKVSKQLESKGIKFEYEEWKVPYVIPASNHTYTPDFLLPNGIFVETKGLWESDDRKKHLLIREQHPELDIRIVFSSSRTKLYKGSPTSYGEFCEKHGIKFADKLIPAEWIKEPKKEVPFDRLKRKGGKK</sequence>
<feature type="chain" id="PRO_0000106486" description="Endonuclease I">
    <location>
        <begin position="1"/>
        <end position="149"/>
    </location>
</feature>
<feature type="helix" evidence="5">
    <location>
        <begin position="18"/>
        <end position="29"/>
    </location>
</feature>
<feature type="strand" evidence="5">
    <location>
        <begin position="35"/>
        <end position="37"/>
    </location>
</feature>
<feature type="strand" evidence="5">
    <location>
        <begin position="39"/>
        <end position="45"/>
    </location>
</feature>
<feature type="strand" evidence="5">
    <location>
        <begin position="48"/>
        <end position="52"/>
    </location>
</feature>
<feature type="strand" evidence="5">
    <location>
        <begin position="55"/>
        <end position="57"/>
    </location>
</feature>
<feature type="strand" evidence="5">
    <location>
        <begin position="63"/>
        <end position="69"/>
    </location>
</feature>
<feature type="helix" evidence="5">
    <location>
        <begin position="72"/>
        <end position="84"/>
    </location>
</feature>
<feature type="strand" evidence="5">
    <location>
        <begin position="90"/>
        <end position="95"/>
    </location>
</feature>
<feature type="strand" evidence="5">
    <location>
        <begin position="99"/>
        <end position="102"/>
    </location>
</feature>
<feature type="helix" evidence="5">
    <location>
        <begin position="109"/>
        <end position="116"/>
    </location>
</feature>
<feature type="strand" evidence="5">
    <location>
        <begin position="120"/>
        <end position="124"/>
    </location>
</feature>
<feature type="helix" evidence="5">
    <location>
        <begin position="127"/>
        <end position="131"/>
    </location>
</feature>
<feature type="helix" evidence="5">
    <location>
        <begin position="139"/>
        <end position="141"/>
    </location>
</feature>
<feature type="strand" evidence="5">
    <location>
        <begin position="142"/>
        <end position="144"/>
    </location>
</feature>
<name>ENDO_BPT7</name>
<protein>
    <recommendedName>
        <fullName>Endonuclease I</fullName>
        <ecNumber>3.1.21.2</ecNumber>
    </recommendedName>
    <alternativeName>
        <fullName>Gene product 3</fullName>
        <shortName>Gp3</shortName>
    </alternativeName>
    <alternativeName>
        <fullName>Junction-resolving enzyme gp3</fullName>
    </alternativeName>
</protein>
<dbReference type="EC" id="3.1.21.2"/>
<dbReference type="EMBL" id="V01127">
    <property type="protein sequence ID" value="CAA24345.1"/>
    <property type="molecule type" value="Genomic_DNA"/>
</dbReference>
<dbReference type="EMBL" id="V01146">
    <property type="protein sequence ID" value="CAA24402.1"/>
    <property type="molecule type" value="Genomic_DNA"/>
</dbReference>
<dbReference type="PIR" id="B94615">
    <property type="entry name" value="NEBP37"/>
</dbReference>
<dbReference type="RefSeq" id="NP_041972.1">
    <property type="nucleotide sequence ID" value="NC_001604.1"/>
</dbReference>
<dbReference type="PDB" id="1FZR">
    <property type="method" value="X-ray"/>
    <property type="resolution" value="2.10 A"/>
    <property type="chains" value="A/B/C/D=12-149"/>
</dbReference>
<dbReference type="PDB" id="1M0D">
    <property type="method" value="X-ray"/>
    <property type="resolution" value="1.90 A"/>
    <property type="chains" value="A/B/C/D=12-149"/>
</dbReference>
<dbReference type="PDB" id="1M0I">
    <property type="method" value="X-ray"/>
    <property type="resolution" value="2.55 A"/>
    <property type="chains" value="A/B/C/D=12-149"/>
</dbReference>
<dbReference type="PDB" id="2PFJ">
    <property type="method" value="X-ray"/>
    <property type="resolution" value="3.10 A"/>
    <property type="chains" value="A/B=1-149"/>
</dbReference>
<dbReference type="PDB" id="3CAE">
    <property type="method" value="X-ray"/>
    <property type="resolution" value="3.00 A"/>
    <property type="chains" value="A/B/C/D/E/F/G/H/I/J=18-145"/>
</dbReference>
<dbReference type="PDBsum" id="1FZR"/>
<dbReference type="PDBsum" id="1M0D"/>
<dbReference type="PDBsum" id="1M0I"/>
<dbReference type="PDBsum" id="2PFJ"/>
<dbReference type="PDBsum" id="3CAE"/>
<dbReference type="SMR" id="P00641"/>
<dbReference type="DIP" id="DIP-41668N"/>
<dbReference type="IntAct" id="P00641">
    <property type="interactions" value="1"/>
</dbReference>
<dbReference type="MINT" id="P00641"/>
<dbReference type="KEGG" id="vg:1261079"/>
<dbReference type="OrthoDB" id="17050at10239"/>
<dbReference type="BRENDA" id="3.1.21.10">
    <property type="organism ID" value="736"/>
</dbReference>
<dbReference type="EvolutionaryTrace" id="P00641"/>
<dbReference type="Proteomes" id="UP000000840">
    <property type="component" value="Genome"/>
</dbReference>
<dbReference type="GO" id="GO:0008821">
    <property type="term" value="F:crossover junction DNA endonuclease activity"/>
    <property type="evidence" value="ECO:0000314"/>
    <property type="project" value="CACAO"/>
</dbReference>
<dbReference type="GO" id="GO:0008833">
    <property type="term" value="F:deoxyribonuclease IV (phage-T4-induced) activity"/>
    <property type="evidence" value="ECO:0007669"/>
    <property type="project" value="UniProtKB-EC"/>
</dbReference>
<dbReference type="GO" id="GO:0003677">
    <property type="term" value="F:DNA binding"/>
    <property type="evidence" value="ECO:0007669"/>
    <property type="project" value="UniProtKB-KW"/>
</dbReference>
<dbReference type="GO" id="GO:1990238">
    <property type="term" value="F:double-stranded DNA endonuclease activity"/>
    <property type="evidence" value="ECO:0000314"/>
    <property type="project" value="CACAO"/>
</dbReference>
<dbReference type="GO" id="GO:0099015">
    <property type="term" value="P:degradation of host chromosome by virus"/>
    <property type="evidence" value="ECO:0007669"/>
    <property type="project" value="UniProtKB-KW"/>
</dbReference>
<dbReference type="GO" id="GO:0015074">
    <property type="term" value="P:DNA integration"/>
    <property type="evidence" value="ECO:0007669"/>
    <property type="project" value="InterPro"/>
</dbReference>
<dbReference type="GO" id="GO:0039657">
    <property type="term" value="P:symbiont-mediated suppression of host gene expression"/>
    <property type="evidence" value="ECO:0007669"/>
    <property type="project" value="UniProtKB-KW"/>
</dbReference>
<dbReference type="CDD" id="cd22324">
    <property type="entry name" value="Endonuclease_I"/>
    <property type="match status" value="1"/>
</dbReference>
<dbReference type="Gene3D" id="3.40.91.30">
    <property type="match status" value="1"/>
</dbReference>
<dbReference type="InterPro" id="IPR008029">
    <property type="entry name" value="Phage_T7_Gp3_endoDNaseI"/>
</dbReference>
<dbReference type="InterPro" id="IPR011335">
    <property type="entry name" value="Restrct_endonuc-II-like"/>
</dbReference>
<dbReference type="Pfam" id="PF05367">
    <property type="entry name" value="Phage_endo_I"/>
    <property type="match status" value="1"/>
</dbReference>
<dbReference type="SUPFAM" id="SSF52980">
    <property type="entry name" value="Restriction endonuclease-like"/>
    <property type="match status" value="1"/>
</dbReference>
<accession>P00641</accession>
<organism>
    <name type="scientific">Escherichia phage T7</name>
    <name type="common">Bacteriophage T7</name>
    <dbReference type="NCBI Taxonomy" id="10760"/>
    <lineage>
        <taxon>Viruses</taxon>
        <taxon>Duplodnaviria</taxon>
        <taxon>Heunggongvirae</taxon>
        <taxon>Uroviricota</taxon>
        <taxon>Caudoviricetes</taxon>
        <taxon>Autographiviridae</taxon>
        <taxon>Studiervirinae</taxon>
        <taxon>Teseptimavirus</taxon>
        <taxon>Teseptimavirus T7</taxon>
    </lineage>
</organism>
<comment type="function">
    <text evidence="1 2 3 4">Junction-resolving enzyme that selectively binds and cleaves four-way (Holliday) DNA junctions present after viral genomic replication. These intermediates are created during DNA repair, processing of stalled replication forks and homologous genetic recombination. Introduces two nicks on the two non-crossing strands, at 5' sides of the junction. Also participates together with gp6 in the degradation of host chromosome to provide nucleotides for phage DNA synthesis.</text>
</comment>
<comment type="catalytic activity">
    <reaction>
        <text>Endonucleolytic cleavage to 5'-phosphooligonucleotide end-products.</text>
        <dbReference type="EC" id="3.1.21.2"/>
    </reaction>
</comment>
<comment type="subunit">
    <text evidence="4">Homodimer.</text>
</comment>